<gene>
    <name evidence="1" type="primary">smpB</name>
    <name type="ordered locus">SUN_0375</name>
</gene>
<evidence type="ECO:0000255" key="1">
    <source>
        <dbReference type="HAMAP-Rule" id="MF_00023"/>
    </source>
</evidence>
<keyword id="KW-0963">Cytoplasm</keyword>
<keyword id="KW-0694">RNA-binding</keyword>
<name>SSRP_SULNB</name>
<feature type="chain" id="PRO_1000002173" description="SsrA-binding protein">
    <location>
        <begin position="1"/>
        <end position="153"/>
    </location>
</feature>
<organism>
    <name type="scientific">Sulfurovum sp. (strain NBC37-1)</name>
    <dbReference type="NCBI Taxonomy" id="387093"/>
    <lineage>
        <taxon>Bacteria</taxon>
        <taxon>Pseudomonadati</taxon>
        <taxon>Campylobacterota</taxon>
        <taxon>Epsilonproteobacteria</taxon>
        <taxon>Campylobacterales</taxon>
        <taxon>Sulfurovaceae</taxon>
        <taxon>Sulfurovum</taxon>
    </lineage>
</organism>
<sequence>MAINIVAQNKKARHDYEILEKFEAGIVLSGAEVKALRAKRANLSDAFCRFIKGELYLMNAHIAHLETANKYFTPDTRAPRKLLLHKKELEKLYVKVHKDGLTIVPLMIYFNERNYAKVSIAIAKGKKLHDKRADMKAKTLDREAKTAMKNRSY</sequence>
<comment type="function">
    <text evidence="1">Required for rescue of stalled ribosomes mediated by trans-translation. Binds to transfer-messenger RNA (tmRNA), required for stable association of tmRNA with ribosomes. tmRNA and SmpB together mimic tRNA shape, replacing the anticodon stem-loop with SmpB. tmRNA is encoded by the ssrA gene; the 2 termini fold to resemble tRNA(Ala) and it encodes a 'tag peptide', a short internal open reading frame. During trans-translation Ala-aminoacylated tmRNA acts like a tRNA, entering the A-site of stalled ribosomes, displacing the stalled mRNA. The ribosome then switches to translate the ORF on the tmRNA; the nascent peptide is terminated with the 'tag peptide' encoded by the tmRNA and targeted for degradation. The ribosome is freed to recommence translation, which seems to be the essential function of trans-translation.</text>
</comment>
<comment type="subcellular location">
    <subcellularLocation>
        <location evidence="1">Cytoplasm</location>
    </subcellularLocation>
    <text evidence="1">The tmRNA-SmpB complex associates with stalled 70S ribosomes.</text>
</comment>
<comment type="similarity">
    <text evidence="1">Belongs to the SmpB family.</text>
</comment>
<dbReference type="EMBL" id="AP009179">
    <property type="protein sequence ID" value="BAF71335.1"/>
    <property type="molecule type" value="Genomic_DNA"/>
</dbReference>
<dbReference type="RefSeq" id="WP_011980068.1">
    <property type="nucleotide sequence ID" value="NC_009663.1"/>
</dbReference>
<dbReference type="SMR" id="A6Q776"/>
<dbReference type="STRING" id="387093.SUN_0375"/>
<dbReference type="KEGG" id="sun:SUN_0375"/>
<dbReference type="eggNOG" id="COG0691">
    <property type="taxonomic scope" value="Bacteria"/>
</dbReference>
<dbReference type="HOGENOM" id="CLU_108953_3_1_7"/>
<dbReference type="OrthoDB" id="9805462at2"/>
<dbReference type="Proteomes" id="UP000006378">
    <property type="component" value="Chromosome"/>
</dbReference>
<dbReference type="GO" id="GO:0005829">
    <property type="term" value="C:cytosol"/>
    <property type="evidence" value="ECO:0007669"/>
    <property type="project" value="TreeGrafter"/>
</dbReference>
<dbReference type="GO" id="GO:0003723">
    <property type="term" value="F:RNA binding"/>
    <property type="evidence" value="ECO:0007669"/>
    <property type="project" value="UniProtKB-UniRule"/>
</dbReference>
<dbReference type="GO" id="GO:0070929">
    <property type="term" value="P:trans-translation"/>
    <property type="evidence" value="ECO:0007669"/>
    <property type="project" value="UniProtKB-UniRule"/>
</dbReference>
<dbReference type="CDD" id="cd09294">
    <property type="entry name" value="SmpB"/>
    <property type="match status" value="1"/>
</dbReference>
<dbReference type="Gene3D" id="2.40.280.10">
    <property type="match status" value="1"/>
</dbReference>
<dbReference type="HAMAP" id="MF_00023">
    <property type="entry name" value="SmpB"/>
    <property type="match status" value="1"/>
</dbReference>
<dbReference type="InterPro" id="IPR023620">
    <property type="entry name" value="SmpB"/>
</dbReference>
<dbReference type="InterPro" id="IPR000037">
    <property type="entry name" value="SsrA-bd_prot"/>
</dbReference>
<dbReference type="InterPro" id="IPR020081">
    <property type="entry name" value="SsrA-bd_prot_CS"/>
</dbReference>
<dbReference type="NCBIfam" id="NF003843">
    <property type="entry name" value="PRK05422.1"/>
    <property type="match status" value="1"/>
</dbReference>
<dbReference type="NCBIfam" id="TIGR00086">
    <property type="entry name" value="smpB"/>
    <property type="match status" value="1"/>
</dbReference>
<dbReference type="PANTHER" id="PTHR30308:SF2">
    <property type="entry name" value="SSRA-BINDING PROTEIN"/>
    <property type="match status" value="1"/>
</dbReference>
<dbReference type="PANTHER" id="PTHR30308">
    <property type="entry name" value="TMRNA-BINDING COMPONENT OF TRANS-TRANSLATION TAGGING COMPLEX"/>
    <property type="match status" value="1"/>
</dbReference>
<dbReference type="Pfam" id="PF01668">
    <property type="entry name" value="SmpB"/>
    <property type="match status" value="1"/>
</dbReference>
<dbReference type="SUPFAM" id="SSF74982">
    <property type="entry name" value="Small protein B (SmpB)"/>
    <property type="match status" value="1"/>
</dbReference>
<dbReference type="PROSITE" id="PS01317">
    <property type="entry name" value="SSRP"/>
    <property type="match status" value="1"/>
</dbReference>
<proteinExistence type="inferred from homology"/>
<accession>A6Q776</accession>
<reference key="1">
    <citation type="journal article" date="2007" name="Proc. Natl. Acad. Sci. U.S.A.">
        <title>Deep-sea vent epsilon-proteobacterial genomes provide insights into emergence of pathogens.</title>
        <authorList>
            <person name="Nakagawa S."/>
            <person name="Takaki Y."/>
            <person name="Shimamura S."/>
            <person name="Reysenbach A.-L."/>
            <person name="Takai K."/>
            <person name="Horikoshi K."/>
        </authorList>
    </citation>
    <scope>NUCLEOTIDE SEQUENCE [LARGE SCALE GENOMIC DNA]</scope>
    <source>
        <strain>NBC37-1</strain>
    </source>
</reference>
<protein>
    <recommendedName>
        <fullName evidence="1">SsrA-binding protein</fullName>
    </recommendedName>
    <alternativeName>
        <fullName evidence="1">Small protein B</fullName>
    </alternativeName>
</protein>